<dbReference type="EMBL" id="M92651">
    <property type="protein sequence ID" value="AAA47321.1"/>
    <property type="molecule type" value="Genomic_RNA"/>
</dbReference>
<dbReference type="PIR" id="A42989">
    <property type="entry name" value="VGXR49"/>
</dbReference>
<dbReference type="SMR" id="P30210"/>
<dbReference type="GO" id="GO:0044166">
    <property type="term" value="C:host cell endoplasmic reticulum lumen"/>
    <property type="evidence" value="ECO:0007669"/>
    <property type="project" value="UniProtKB-SubCell"/>
</dbReference>
<dbReference type="GO" id="GO:0039621">
    <property type="term" value="C:T=13 icosahedral viral capsid"/>
    <property type="evidence" value="ECO:0007669"/>
    <property type="project" value="UniProtKB-UniRule"/>
</dbReference>
<dbReference type="GO" id="GO:0039624">
    <property type="term" value="C:viral outer capsid"/>
    <property type="evidence" value="ECO:0007669"/>
    <property type="project" value="UniProtKB-UniRule"/>
</dbReference>
<dbReference type="GO" id="GO:0046872">
    <property type="term" value="F:metal ion binding"/>
    <property type="evidence" value="ECO:0007669"/>
    <property type="project" value="UniProtKB-KW"/>
</dbReference>
<dbReference type="Gene3D" id="3.40.50.11130">
    <property type="entry name" value="Glycoprotein VP7, domain 1"/>
    <property type="match status" value="1"/>
</dbReference>
<dbReference type="Gene3D" id="2.60.120.800">
    <property type="entry name" value="Rotavirus outer-layer protein VP7, domain 2"/>
    <property type="match status" value="1"/>
</dbReference>
<dbReference type="HAMAP" id="MF_04130">
    <property type="entry name" value="Rota_VP7"/>
    <property type="match status" value="1"/>
</dbReference>
<dbReference type="HAMAP" id="MF_04131">
    <property type="entry name" value="Rota_VP7_A"/>
    <property type="match status" value="1"/>
</dbReference>
<dbReference type="InterPro" id="IPR001963">
    <property type="entry name" value="VP7"/>
</dbReference>
<dbReference type="InterPro" id="IPR042207">
    <property type="entry name" value="VP7_1"/>
</dbReference>
<dbReference type="InterPro" id="IPR042210">
    <property type="entry name" value="VP7_2"/>
</dbReference>
<dbReference type="Pfam" id="PF00434">
    <property type="entry name" value="VP7"/>
    <property type="match status" value="1"/>
</dbReference>
<reference key="1">
    <citation type="journal article" date="1992" name="Virology">
        <title>A bovine rotavirus serotype 1: serologic characterization of the virus and nucleotide sequence determination of the structural glycoprotein VP7 gene.</title>
        <authorList>
            <person name="Blackhall J."/>
            <person name="Bellinzoni R."/>
            <person name="Mattion N.M."/>
            <person name="Estes M.K."/>
            <person name="la Torre J.L."/>
            <person name="Magnusson G."/>
        </authorList>
    </citation>
    <scope>NUCLEOTIDE SEQUENCE [GENOMIC RNA]</scope>
</reference>
<feature type="signal peptide" evidence="2">
    <location>
        <begin position="1"/>
        <end position="50"/>
    </location>
</feature>
<feature type="chain" id="PRO_0000149586" description="Outer capsid glycoprotein VP7" evidence="2">
    <location>
        <begin position="51"/>
        <end position="326"/>
    </location>
</feature>
<feature type="region of interest" description="CNP motif; interaction with ITGAV/ITGB3" evidence="2">
    <location>
        <begin position="165"/>
        <end position="167"/>
    </location>
</feature>
<feature type="region of interest" description="GPR motif; interaction with ITGAX/ITGB2" evidence="2">
    <location>
        <begin position="253"/>
        <end position="255"/>
    </location>
</feature>
<feature type="binding site" evidence="2">
    <location>
        <position position="95"/>
    </location>
    <ligand>
        <name>Ca(2+)</name>
        <dbReference type="ChEBI" id="CHEBI:29108"/>
        <label>1</label>
    </ligand>
</feature>
<feature type="binding site" evidence="2">
    <location>
        <position position="177"/>
    </location>
    <ligand>
        <name>Ca(2+)</name>
        <dbReference type="ChEBI" id="CHEBI:29108"/>
        <label>2</label>
    </ligand>
</feature>
<feature type="binding site" evidence="2">
    <location>
        <position position="206"/>
    </location>
    <ligand>
        <name>Ca(2+)</name>
        <dbReference type="ChEBI" id="CHEBI:29108"/>
        <label>1</label>
    </ligand>
</feature>
<feature type="binding site" evidence="2">
    <location>
        <position position="214"/>
    </location>
    <ligand>
        <name>Ca(2+)</name>
        <dbReference type="ChEBI" id="CHEBI:29108"/>
        <label>1</label>
    </ligand>
</feature>
<feature type="binding site" evidence="2">
    <location>
        <position position="216"/>
    </location>
    <ligand>
        <name>Ca(2+)</name>
        <dbReference type="ChEBI" id="CHEBI:29108"/>
        <label>1</label>
    </ligand>
</feature>
<feature type="binding site" evidence="2">
    <location>
        <position position="228"/>
    </location>
    <ligand>
        <name>Ca(2+)</name>
        <dbReference type="ChEBI" id="CHEBI:29108"/>
        <label>2</label>
    </ligand>
</feature>
<feature type="binding site" evidence="2">
    <location>
        <position position="229"/>
    </location>
    <ligand>
        <name>Ca(2+)</name>
        <dbReference type="ChEBI" id="CHEBI:29108"/>
        <label>2</label>
    </ligand>
</feature>
<feature type="binding site" evidence="2">
    <location>
        <position position="231"/>
    </location>
    <ligand>
        <name>Ca(2+)</name>
        <dbReference type="ChEBI" id="CHEBI:29108"/>
        <label>2</label>
    </ligand>
</feature>
<feature type="binding site" evidence="2">
    <location>
        <position position="301"/>
    </location>
    <ligand>
        <name>Ca(2+)</name>
        <dbReference type="ChEBI" id="CHEBI:29108"/>
        <label>2</label>
    </ligand>
</feature>
<feature type="glycosylation site" description="N-linked (GlcNAc...) asparagine; by host" evidence="1">
    <location>
        <position position="69"/>
    </location>
</feature>
<feature type="glycosylation site" description="N-linked (GlcNAc...) asparagine; by host" evidence="1">
    <location>
        <position position="238"/>
    </location>
</feature>
<feature type="disulfide bond" evidence="2">
    <location>
        <begin position="82"/>
        <end position="135"/>
    </location>
</feature>
<feature type="disulfide bond" evidence="2">
    <location>
        <begin position="165"/>
        <end position="249"/>
    </location>
</feature>
<feature type="disulfide bond" evidence="2">
    <location>
        <begin position="191"/>
        <end position="244"/>
    </location>
</feature>
<feature type="disulfide bond" evidence="2">
    <location>
        <begin position="196"/>
        <end position="207"/>
    </location>
</feature>
<feature type="splice variant" id="VSP_038578" description="In isoform 2." evidence="3">
    <location>
        <begin position="1"/>
        <end position="29"/>
    </location>
</feature>
<keyword id="KW-0024">Alternative initiation</keyword>
<keyword id="KW-0106">Calcium</keyword>
<keyword id="KW-0167">Capsid protein</keyword>
<keyword id="KW-1015">Disulfide bond</keyword>
<keyword id="KW-0325">Glycoprotein</keyword>
<keyword id="KW-1038">Host endoplasmic reticulum</keyword>
<keyword id="KW-0945">Host-virus interaction</keyword>
<keyword id="KW-0479">Metal-binding</keyword>
<keyword id="KW-1152">Outer capsid protein</keyword>
<keyword id="KW-0732">Signal</keyword>
<keyword id="KW-1146">T=13 icosahedral capsid protein</keyword>
<keyword id="KW-0946">Virion</keyword>
<comment type="function">
    <text evidence="2">Calcium-binding protein that interacts with rotavirus cell receptors once the initial attachment by VP4 has been achieved. Rotavirus attachment and entry into the host cell probably involves multiple sequential contacts between the outer capsid proteins VP4 and VP7, and the cell receptors. Following entry into the host cell, low intracellular or intravesicular Ca(2+) concentration probably causes the calcium-stabilized VP7 trimers to dissociate from the virion. This step is probably necessary for the membrane-disrupting entry step and the release of VP4, which is locked onto the virion by VP7.</text>
</comment>
<comment type="subunit">
    <text evidence="2">Homotrimer; disulfide-linked. 2 Ca(2+) ions bound at each subunit interface in the trimer hold the trimer together. Interacts with the intermediate capsid protein VP6. Interacts with the outer capsid protein VP5*.</text>
</comment>
<comment type="subcellular location">
    <subcellularLocation>
        <location evidence="2">Virion</location>
    </subcellularLocation>
    <subcellularLocation>
        <location evidence="2">Host endoplasmic reticulum lumen</location>
    </subcellularLocation>
    <text evidence="2">The outer layer contains 780 copies of VP7, grouped as 260 trimers. Immature double-layered particles assembled in the cytoplasm bud across the membrane of the endoplasmic reticulum, acquiring during this process a transient lipid membrane that is modified with the ER resident viral glycoproteins NSP4 and VP7; these enveloped particles also contain VP4. As the particles move towards the interior of the ER cisternae, the transient lipid membrane and the non-structural protein NSP4 are lost, while the virus surface proteins VP4 and VP7 rearrange to form the outermost virus protein layer, yielding mature infectious triple-layered particles.</text>
</comment>
<comment type="alternative products">
    <event type="alternative initiation"/>
    <isoform>
        <id>P30210-1</id>
        <name>1</name>
        <sequence type="displayed"/>
    </isoform>
    <isoform>
        <id>P30210-2</id>
        <name>2</name>
        <sequence type="described" ref="VSP_038578"/>
    </isoform>
</comment>
<comment type="PTM">
    <text evidence="2">N-glycosylated.</text>
</comment>
<comment type="PTM">
    <text evidence="2">The N-terminus is blocked possibly by pyroglutamic acid.</text>
</comment>
<comment type="miscellaneous">
    <text evidence="2">Some rotavirus strains are neuraminidase-sensitive and require sialic acid to attach to the cell surface. Some rotavirus strains are integrin-dependent. Some rotavirus strains depend on ganglioside for their entry into the host cell. Hsp70 also seems to be involved in the entry of some strains.</text>
</comment>
<comment type="miscellaneous">
    <text evidence="2">In group A rotaviruses, VP7 defines the G serotype.</text>
</comment>
<comment type="miscellaneous">
    <molecule>Isoform 2</molecule>
    <text evidence="3">Produced by alternative initiation at Met-30 of isoform 1.</text>
</comment>
<comment type="similarity">
    <text evidence="2">Belongs to the rotavirus VP7 family.</text>
</comment>
<evidence type="ECO:0000255" key="1"/>
<evidence type="ECO:0000255" key="2">
    <source>
        <dbReference type="HAMAP-Rule" id="MF_04131"/>
    </source>
</evidence>
<evidence type="ECO:0000305" key="3"/>
<accession>P30210</accession>
<organismHost>
    <name type="scientific">Bos taurus</name>
    <name type="common">Bovine</name>
    <dbReference type="NCBI Taxonomy" id="9913"/>
</organismHost>
<protein>
    <recommendedName>
        <fullName evidence="2">Outer capsid glycoprotein VP7</fullName>
    </recommendedName>
</protein>
<name>VP7_ROTBT</name>
<proteinExistence type="inferred from homology"/>
<sequence>MYGIEYTTILTFLISIILLNYILKSTTQMMDYIIYRFLLITVTLFALTKAQNYGINLPITGSMDTAYANSTKEETFMTSTLCLYYPVEASNQINDGEWKDTLSQMFLTKGWPTGSVYFKEYTNIVDFSVDPQLYCDYNLVLMKYDQNLELDMSELADLILNEWLCNPMDITLYYYQQTGESNKWISMGSSCTVKVCPLNTQTLGIGCQTTQCGSFEIVAENEKLAIVDVVDGINHKINLTTTTCTIRNCKKLGPRENVAVIQVGGSNILDITADPTTNPQIERIMRVNWKEWWKVFYTIVDYINQIVQVMSKRSRSLNSAGFYYRV</sequence>
<organism>
    <name type="scientific">Rotavirus A (isolate RVA/Cow/Argentina/T449/1992/G1P[X])</name>
    <name type="common">RV-A</name>
    <dbReference type="NCBI Taxonomy" id="31583"/>
    <lineage>
        <taxon>Viruses</taxon>
        <taxon>Riboviria</taxon>
        <taxon>Orthornavirae</taxon>
        <taxon>Duplornaviricota</taxon>
        <taxon>Resentoviricetes</taxon>
        <taxon>Reovirales</taxon>
        <taxon>Sedoreoviridae</taxon>
        <taxon>Rotavirus</taxon>
        <taxon>Rotavirus A</taxon>
    </lineage>
</organism>